<sequence>MVRVKICGITNLEDALFSVESGADAVGFVFYPKSKRYISPEDARRISVELPPFVFRVGVFVNEEPEKILDVASYVQLNAVQLHGEEPIELCRKIAERILVIKAVGVSNERDMERALNYREFPILLDTKTPEYGGSGKTFDWSLILPYRDRFRYLVLSGGLNPENVRSAIDVVRPFAVDVSSGVEAFPGKKDHDSIKMFIKNAKGL</sequence>
<accession>Q56320</accession>
<evidence type="ECO:0000305" key="1"/>
<evidence type="ECO:0007829" key="2">
    <source>
        <dbReference type="PDB" id="1NSJ"/>
    </source>
</evidence>
<proteinExistence type="evidence at protein level"/>
<name>TRPF_THEMA</name>
<keyword id="KW-0002">3D-structure</keyword>
<keyword id="KW-0028">Amino-acid biosynthesis</keyword>
<keyword id="KW-0057">Aromatic amino acid biosynthesis</keyword>
<keyword id="KW-0413">Isomerase</keyword>
<keyword id="KW-1185">Reference proteome</keyword>
<keyword id="KW-0822">Tryptophan biosynthesis</keyword>
<dbReference type="EC" id="5.3.1.24"/>
<dbReference type="EMBL" id="X92729">
    <property type="protein sequence ID" value="CAA63390.1"/>
    <property type="molecule type" value="Genomic_DNA"/>
</dbReference>
<dbReference type="EMBL" id="AE000512">
    <property type="protein sequence ID" value="AAD35232.1"/>
    <property type="molecule type" value="Genomic_DNA"/>
</dbReference>
<dbReference type="PIR" id="S59048">
    <property type="entry name" value="S59048"/>
</dbReference>
<dbReference type="RefSeq" id="NP_227954.1">
    <property type="nucleotide sequence ID" value="NC_000853.1"/>
</dbReference>
<dbReference type="RefSeq" id="WP_004082737.1">
    <property type="nucleotide sequence ID" value="NZ_CP011107.1"/>
</dbReference>
<dbReference type="PDB" id="1DL3">
    <property type="method" value="X-ray"/>
    <property type="resolution" value="2.70 A"/>
    <property type="chains" value="A/B=1-205"/>
</dbReference>
<dbReference type="PDB" id="1LBM">
    <property type="method" value="X-ray"/>
    <property type="resolution" value="2.80 A"/>
    <property type="chains" value="A=1-205"/>
</dbReference>
<dbReference type="PDB" id="1NSJ">
    <property type="method" value="X-ray"/>
    <property type="resolution" value="2.00 A"/>
    <property type="chains" value="A=1-205"/>
</dbReference>
<dbReference type="PDBsum" id="1DL3"/>
<dbReference type="PDBsum" id="1LBM"/>
<dbReference type="PDBsum" id="1NSJ"/>
<dbReference type="SMR" id="Q56320"/>
<dbReference type="FunCoup" id="Q56320">
    <property type="interactions" value="181"/>
</dbReference>
<dbReference type="STRING" id="243274.TM_0139"/>
<dbReference type="DrugBank" id="DB03543">
    <property type="generic name" value="1-(O-Carboxy-Phenylamino)-1-Deoxy-D-Ribulose-5-Phosphate"/>
</dbReference>
<dbReference type="PaxDb" id="243274-THEMA_04110"/>
<dbReference type="EnsemblBacteria" id="AAD35232">
    <property type="protein sequence ID" value="AAD35232"/>
    <property type="gene ID" value="TM_0139"/>
</dbReference>
<dbReference type="KEGG" id="tma:TM0139"/>
<dbReference type="KEGG" id="tmi:THEMA_04110"/>
<dbReference type="KEGG" id="tmm:Tmari_0137"/>
<dbReference type="KEGG" id="tmw:THMA_0134"/>
<dbReference type="eggNOG" id="COG0135">
    <property type="taxonomic scope" value="Bacteria"/>
</dbReference>
<dbReference type="InParanoid" id="Q56320"/>
<dbReference type="OrthoDB" id="9786954at2"/>
<dbReference type="BioCyc" id="MetaCyc:MONOMER-301"/>
<dbReference type="BRENDA" id="5.3.1.24">
    <property type="organism ID" value="6331"/>
</dbReference>
<dbReference type="SABIO-RK" id="Q56320"/>
<dbReference type="UniPathway" id="UPA00035">
    <property type="reaction ID" value="UER00042"/>
</dbReference>
<dbReference type="EvolutionaryTrace" id="Q56320"/>
<dbReference type="Proteomes" id="UP000008183">
    <property type="component" value="Chromosome"/>
</dbReference>
<dbReference type="GO" id="GO:0004640">
    <property type="term" value="F:phosphoribosylanthranilate isomerase activity"/>
    <property type="evidence" value="ECO:0000318"/>
    <property type="project" value="GO_Central"/>
</dbReference>
<dbReference type="GO" id="GO:0000162">
    <property type="term" value="P:L-tryptophan biosynthetic process"/>
    <property type="evidence" value="ECO:0000318"/>
    <property type="project" value="GO_Central"/>
</dbReference>
<dbReference type="CDD" id="cd00405">
    <property type="entry name" value="PRAI"/>
    <property type="match status" value="1"/>
</dbReference>
<dbReference type="FunFam" id="3.20.20.70:FF:000075">
    <property type="entry name" value="Tryptophan biosynthesis protein TRP1"/>
    <property type="match status" value="1"/>
</dbReference>
<dbReference type="Gene3D" id="3.20.20.70">
    <property type="entry name" value="Aldolase class I"/>
    <property type="match status" value="1"/>
</dbReference>
<dbReference type="HAMAP" id="MF_00135">
    <property type="entry name" value="PRAI"/>
    <property type="match status" value="1"/>
</dbReference>
<dbReference type="InterPro" id="IPR013785">
    <property type="entry name" value="Aldolase_TIM"/>
</dbReference>
<dbReference type="InterPro" id="IPR001240">
    <property type="entry name" value="PRAI_dom"/>
</dbReference>
<dbReference type="InterPro" id="IPR011060">
    <property type="entry name" value="RibuloseP-bd_barrel"/>
</dbReference>
<dbReference type="InterPro" id="IPR044643">
    <property type="entry name" value="TrpF_fam"/>
</dbReference>
<dbReference type="NCBIfam" id="NF002298">
    <property type="entry name" value="PRK01222.1-4"/>
    <property type="match status" value="1"/>
</dbReference>
<dbReference type="PANTHER" id="PTHR42894">
    <property type="entry name" value="N-(5'-PHOSPHORIBOSYL)ANTHRANILATE ISOMERASE"/>
    <property type="match status" value="1"/>
</dbReference>
<dbReference type="PANTHER" id="PTHR42894:SF1">
    <property type="entry name" value="N-(5'-PHOSPHORIBOSYL)ANTHRANILATE ISOMERASE"/>
    <property type="match status" value="1"/>
</dbReference>
<dbReference type="Pfam" id="PF00697">
    <property type="entry name" value="PRAI"/>
    <property type="match status" value="1"/>
</dbReference>
<dbReference type="SUPFAM" id="SSF51366">
    <property type="entry name" value="Ribulose-phoshate binding barrel"/>
    <property type="match status" value="1"/>
</dbReference>
<gene>
    <name type="primary">trpF</name>
    <name type="ordered locus">TM_0139</name>
</gene>
<organism>
    <name type="scientific">Thermotoga maritima (strain ATCC 43589 / DSM 3109 / JCM 10099 / NBRC 100826 / MSB8)</name>
    <dbReference type="NCBI Taxonomy" id="243274"/>
    <lineage>
        <taxon>Bacteria</taxon>
        <taxon>Thermotogati</taxon>
        <taxon>Thermotogota</taxon>
        <taxon>Thermotogae</taxon>
        <taxon>Thermotogales</taxon>
        <taxon>Thermotogaceae</taxon>
        <taxon>Thermotoga</taxon>
    </lineage>
</organism>
<reference key="1">
    <citation type="journal article" date="1995" name="EMBO J.">
        <title>(Beta alpha)8-barrel proteins of tryptophan biosynthesis in the hyperthermophile Thermotoga maritima.</title>
        <authorList>
            <person name="Sterner R."/>
            <person name="Dahm A."/>
            <person name="Darimont B."/>
            <person name="Ivens A."/>
            <person name="Liebl W."/>
            <person name="Kirschner K."/>
        </authorList>
    </citation>
    <scope>NUCLEOTIDE SEQUENCE [GENOMIC DNA]</scope>
</reference>
<reference key="2">
    <citation type="journal article" date="1999" name="Nature">
        <title>Evidence for lateral gene transfer between Archaea and Bacteria from genome sequence of Thermotoga maritima.</title>
        <authorList>
            <person name="Nelson K.E."/>
            <person name="Clayton R.A."/>
            <person name="Gill S.R."/>
            <person name="Gwinn M.L."/>
            <person name="Dodson R.J."/>
            <person name="Haft D.H."/>
            <person name="Hickey E.K."/>
            <person name="Peterson J.D."/>
            <person name="Nelson W.C."/>
            <person name="Ketchum K.A."/>
            <person name="McDonald L.A."/>
            <person name="Utterback T.R."/>
            <person name="Malek J.A."/>
            <person name="Linher K.D."/>
            <person name="Garrett M.M."/>
            <person name="Stewart A.M."/>
            <person name="Cotton M.D."/>
            <person name="Pratt M.S."/>
            <person name="Phillips C.A."/>
            <person name="Richardson D.L."/>
            <person name="Heidelberg J.F."/>
            <person name="Sutton G.G."/>
            <person name="Fleischmann R.D."/>
            <person name="Eisen J.A."/>
            <person name="White O."/>
            <person name="Salzberg S.L."/>
            <person name="Smith H.O."/>
            <person name="Venter J.C."/>
            <person name="Fraser C.M."/>
        </authorList>
    </citation>
    <scope>NUCLEOTIDE SEQUENCE [LARGE SCALE GENOMIC DNA]</scope>
    <source>
        <strain>ATCC 43589 / DSM 3109 / JCM 10099 / NBRC 100826 / MSB8</strain>
    </source>
</reference>
<reference key="3">
    <citation type="journal article" date="1997" name="Biochemistry">
        <title>Crystal structure at 2.0-A resolution of phosphoribosyl anthranilate isomerase from the hyperthermophile Thermotoga maritima: possible determinants of protein stability.</title>
        <authorList>
            <person name="Hennig M."/>
            <person name="Sterner R."/>
            <person name="Kirschner K."/>
            <person name="Jansonius J.N."/>
        </authorList>
    </citation>
    <scope>X-RAY CRYSTALLOGRAPHY (2.0 ANGSTROMS)</scope>
</reference>
<feature type="chain" id="PRO_0000154390" description="N-(5'-phosphoribosyl)anthranilate isomerase">
    <location>
        <begin position="1"/>
        <end position="205"/>
    </location>
</feature>
<feature type="strand" evidence="2">
    <location>
        <begin position="3"/>
        <end position="6"/>
    </location>
</feature>
<feature type="helix" evidence="2">
    <location>
        <begin position="12"/>
        <end position="21"/>
    </location>
</feature>
<feature type="strand" evidence="2">
    <location>
        <begin position="24"/>
        <end position="29"/>
    </location>
</feature>
<feature type="helix" evidence="2">
    <location>
        <begin position="40"/>
        <end position="49"/>
    </location>
</feature>
<feature type="strand" evidence="2">
    <location>
        <begin position="52"/>
        <end position="62"/>
    </location>
</feature>
<feature type="helix" evidence="2">
    <location>
        <begin position="65"/>
        <end position="75"/>
    </location>
</feature>
<feature type="strand" evidence="2">
    <location>
        <begin position="78"/>
        <end position="82"/>
    </location>
</feature>
<feature type="helix" evidence="2">
    <location>
        <begin position="88"/>
        <end position="95"/>
    </location>
</feature>
<feature type="strand" evidence="2">
    <location>
        <begin position="98"/>
        <end position="108"/>
    </location>
</feature>
<feature type="helix" evidence="2">
    <location>
        <begin position="109"/>
        <end position="115"/>
    </location>
</feature>
<feature type="helix" evidence="2">
    <location>
        <begin position="116"/>
        <end position="118"/>
    </location>
</feature>
<feature type="strand" evidence="2">
    <location>
        <begin position="123"/>
        <end position="128"/>
    </location>
</feature>
<feature type="strand" evidence="2">
    <location>
        <begin position="130"/>
        <end position="134"/>
    </location>
</feature>
<feature type="helix" evidence="2">
    <location>
        <begin position="141"/>
        <end position="143"/>
    </location>
</feature>
<feature type="helix" evidence="2">
    <location>
        <begin position="145"/>
        <end position="150"/>
    </location>
</feature>
<feature type="strand" evidence="2">
    <location>
        <begin position="154"/>
        <end position="159"/>
    </location>
</feature>
<feature type="turn" evidence="2">
    <location>
        <begin position="162"/>
        <end position="164"/>
    </location>
</feature>
<feature type="helix" evidence="2">
    <location>
        <begin position="165"/>
        <end position="172"/>
    </location>
</feature>
<feature type="strand" evidence="2">
    <location>
        <begin position="175"/>
        <end position="180"/>
    </location>
</feature>
<feature type="helix" evidence="2">
    <location>
        <begin position="181"/>
        <end position="183"/>
    </location>
</feature>
<feature type="strand" evidence="2">
    <location>
        <begin position="184"/>
        <end position="186"/>
    </location>
</feature>
<feature type="helix" evidence="2">
    <location>
        <begin position="192"/>
        <end position="203"/>
    </location>
</feature>
<comment type="catalytic activity">
    <reaction>
        <text>N-(5-phospho-beta-D-ribosyl)anthranilate = 1-(2-carboxyphenylamino)-1-deoxy-D-ribulose 5-phosphate</text>
        <dbReference type="Rhea" id="RHEA:21540"/>
        <dbReference type="ChEBI" id="CHEBI:18277"/>
        <dbReference type="ChEBI" id="CHEBI:58613"/>
        <dbReference type="EC" id="5.3.1.24"/>
    </reaction>
</comment>
<comment type="pathway">
    <text>Amino-acid biosynthesis; L-tryptophan biosynthesis; L-tryptophan from chorismate: step 3/5.</text>
</comment>
<comment type="subunit">
    <text>Homodimer.</text>
</comment>
<comment type="similarity">
    <text evidence="1">Belongs to the TrpF family.</text>
</comment>
<protein>
    <recommendedName>
        <fullName>N-(5'-phosphoribosyl)anthranilate isomerase</fullName>
        <shortName>PRAI</shortName>
        <ecNumber>5.3.1.24</ecNumber>
    </recommendedName>
</protein>